<accession>A7FD14</accession>
<evidence type="ECO:0000255" key="1">
    <source>
        <dbReference type="HAMAP-Rule" id="MF_01531"/>
    </source>
</evidence>
<evidence type="ECO:0000255" key="2">
    <source>
        <dbReference type="PROSITE-ProRule" id="PRU01360"/>
    </source>
</evidence>
<dbReference type="EMBL" id="CP000720">
    <property type="protein sequence ID" value="ABS49840.1"/>
    <property type="molecule type" value="Genomic_DNA"/>
</dbReference>
<dbReference type="RefSeq" id="WP_024063655.1">
    <property type="nucleotide sequence ID" value="NC_009708.1"/>
</dbReference>
<dbReference type="SMR" id="A7FD14"/>
<dbReference type="GeneID" id="49787904"/>
<dbReference type="KEGG" id="ypi:YpsIP31758_0142"/>
<dbReference type="HOGENOM" id="CLU_008287_18_5_6"/>
<dbReference type="Proteomes" id="UP000002412">
    <property type="component" value="Chromosome"/>
</dbReference>
<dbReference type="GO" id="GO:0009279">
    <property type="term" value="C:cell outer membrane"/>
    <property type="evidence" value="ECO:0007669"/>
    <property type="project" value="UniProtKB-SubCell"/>
</dbReference>
<dbReference type="GO" id="GO:0046930">
    <property type="term" value="C:pore complex"/>
    <property type="evidence" value="ECO:0007669"/>
    <property type="project" value="UniProtKB-KW"/>
</dbReference>
<dbReference type="GO" id="GO:0015420">
    <property type="term" value="F:ABC-type vitamin B12 transporter activity"/>
    <property type="evidence" value="ECO:0007669"/>
    <property type="project" value="InterPro"/>
</dbReference>
<dbReference type="GO" id="GO:0046872">
    <property type="term" value="F:metal ion binding"/>
    <property type="evidence" value="ECO:0007669"/>
    <property type="project" value="UniProtKB-KW"/>
</dbReference>
<dbReference type="GO" id="GO:0015288">
    <property type="term" value="F:porin activity"/>
    <property type="evidence" value="ECO:0007669"/>
    <property type="project" value="UniProtKB-KW"/>
</dbReference>
<dbReference type="GO" id="GO:0006811">
    <property type="term" value="P:monoatomic ion transport"/>
    <property type="evidence" value="ECO:0007669"/>
    <property type="project" value="UniProtKB-KW"/>
</dbReference>
<dbReference type="CDD" id="cd01347">
    <property type="entry name" value="ligand_gated_channel"/>
    <property type="match status" value="1"/>
</dbReference>
<dbReference type="FunFam" id="2.170.130.10:FF:000002">
    <property type="entry name" value="Vitamin B12 transporter BtuB"/>
    <property type="match status" value="1"/>
</dbReference>
<dbReference type="Gene3D" id="2.40.170.20">
    <property type="entry name" value="TonB-dependent receptor, beta-barrel domain"/>
    <property type="match status" value="1"/>
</dbReference>
<dbReference type="Gene3D" id="2.170.130.10">
    <property type="entry name" value="TonB-dependent receptor, plug domain"/>
    <property type="match status" value="1"/>
</dbReference>
<dbReference type="HAMAP" id="MF_01531">
    <property type="entry name" value="BtuB"/>
    <property type="match status" value="1"/>
</dbReference>
<dbReference type="InterPro" id="IPR010101">
    <property type="entry name" value="B12_transptr_BtuB"/>
</dbReference>
<dbReference type="InterPro" id="IPR012910">
    <property type="entry name" value="Plug_dom"/>
</dbReference>
<dbReference type="InterPro" id="IPR037066">
    <property type="entry name" value="Plug_dom_sf"/>
</dbReference>
<dbReference type="InterPro" id="IPR039426">
    <property type="entry name" value="TonB-dep_rcpt-like"/>
</dbReference>
<dbReference type="InterPro" id="IPR000531">
    <property type="entry name" value="TonB-dep_rcpt_b-brl"/>
</dbReference>
<dbReference type="InterPro" id="IPR036942">
    <property type="entry name" value="TonB_rcpt_b-brl_sf"/>
</dbReference>
<dbReference type="InterPro" id="IPR010917">
    <property type="entry name" value="TonB_rcpt_CS"/>
</dbReference>
<dbReference type="NCBIfam" id="NF007926">
    <property type="entry name" value="PRK10641.1"/>
    <property type="match status" value="1"/>
</dbReference>
<dbReference type="NCBIfam" id="TIGR01779">
    <property type="entry name" value="TonB-B12"/>
    <property type="match status" value="1"/>
</dbReference>
<dbReference type="PANTHER" id="PTHR30069:SF53">
    <property type="entry name" value="COLICIN I RECEPTOR-RELATED"/>
    <property type="match status" value="1"/>
</dbReference>
<dbReference type="PANTHER" id="PTHR30069">
    <property type="entry name" value="TONB-DEPENDENT OUTER MEMBRANE RECEPTOR"/>
    <property type="match status" value="1"/>
</dbReference>
<dbReference type="Pfam" id="PF07715">
    <property type="entry name" value="Plug"/>
    <property type="match status" value="1"/>
</dbReference>
<dbReference type="Pfam" id="PF00593">
    <property type="entry name" value="TonB_dep_Rec_b-barrel"/>
    <property type="match status" value="1"/>
</dbReference>
<dbReference type="SUPFAM" id="SSF56935">
    <property type="entry name" value="Porins"/>
    <property type="match status" value="1"/>
</dbReference>
<dbReference type="PROSITE" id="PS01156">
    <property type="entry name" value="TONB_DEPENDENT_REC_2"/>
    <property type="match status" value="1"/>
</dbReference>
<dbReference type="PROSITE" id="PS52016">
    <property type="entry name" value="TONB_DEPENDENT_REC_3"/>
    <property type="match status" value="1"/>
</dbReference>
<comment type="function">
    <text evidence="1">Involved in the active translocation of vitamin B12 (cyanocobalamin) across the outer membrane to the periplasmic space. It derives its energy for transport by interacting with the trans-periplasmic membrane protein TonB.</text>
</comment>
<comment type="subcellular location">
    <subcellularLocation>
        <location evidence="1">Cell outer membrane</location>
        <topology evidence="1">Multi-pass membrane protein</topology>
    </subcellularLocation>
</comment>
<comment type="similarity">
    <text evidence="1">Belongs to the TonB-dependent receptor family. BtuB (TC 1.B.14.3.1) subfamily.</text>
</comment>
<reference key="1">
    <citation type="journal article" date="2007" name="PLoS Genet.">
        <title>The complete genome sequence of Yersinia pseudotuberculosis IP31758, the causative agent of Far East scarlet-like fever.</title>
        <authorList>
            <person name="Eppinger M."/>
            <person name="Rosovitz M.J."/>
            <person name="Fricke W.F."/>
            <person name="Rasko D.A."/>
            <person name="Kokorina G."/>
            <person name="Fayolle C."/>
            <person name="Lindler L.E."/>
            <person name="Carniel E."/>
            <person name="Ravel J."/>
        </authorList>
    </citation>
    <scope>NUCLEOTIDE SEQUENCE [LARGE SCALE GENOMIC DNA]</scope>
    <source>
        <strain>IP 31758</strain>
    </source>
</reference>
<feature type="signal peptide" evidence="1">
    <location>
        <begin position="1"/>
        <end position="21"/>
    </location>
</feature>
<feature type="chain" id="PRO_0000316880" description="Vitamin B12 transporter BtuB">
    <location>
        <begin position="22"/>
        <end position="624"/>
    </location>
</feature>
<feature type="transmembrane region" description="Beta stranded" evidence="1">
    <location>
        <begin position="163"/>
        <end position="170"/>
    </location>
</feature>
<feature type="transmembrane region" description="Beta stranded" evidence="1">
    <location>
        <begin position="174"/>
        <end position="183"/>
    </location>
</feature>
<feature type="transmembrane region" description="Beta stranded" evidence="1">
    <location>
        <begin position="189"/>
        <end position="200"/>
    </location>
</feature>
<feature type="transmembrane region" description="Beta stranded" evidence="1">
    <location>
        <begin position="222"/>
        <end position="232"/>
    </location>
</feature>
<feature type="transmembrane region" description="Beta stranded" evidence="1">
    <location>
        <begin position="237"/>
        <end position="253"/>
    </location>
</feature>
<feature type="transmembrane region" description="Beta stranded" evidence="1">
    <location>
        <begin position="268"/>
        <end position="282"/>
    </location>
</feature>
<feature type="transmembrane region" description="Beta stranded" evidence="1">
    <location>
        <begin position="284"/>
        <end position="301"/>
    </location>
</feature>
<feature type="transmembrane region" description="Beta stranded" evidence="1">
    <location>
        <begin position="314"/>
        <end position="330"/>
    </location>
</feature>
<feature type="transmembrane region" description="Beta stranded" evidence="1">
    <location>
        <begin position="333"/>
        <end position="342"/>
    </location>
</feature>
<feature type="transmembrane region" description="Beta stranded" evidence="1">
    <location>
        <begin position="358"/>
        <end position="374"/>
    </location>
</feature>
<feature type="transmembrane region" description="Beta stranded" evidence="1">
    <location>
        <begin position="376"/>
        <end position="386"/>
    </location>
</feature>
<feature type="transmembrane region" description="Beta stranded" evidence="1">
    <location>
        <begin position="390"/>
        <end position="405"/>
    </location>
</feature>
<feature type="transmembrane region" description="Beta stranded" evidence="1">
    <location>
        <begin position="408"/>
        <end position="422"/>
    </location>
</feature>
<feature type="transmembrane region" description="Beta stranded" evidence="1">
    <location>
        <begin position="440"/>
        <end position="449"/>
    </location>
</feature>
<feature type="transmembrane region" description="Beta stranded" evidence="1">
    <location>
        <begin position="455"/>
        <end position="464"/>
    </location>
</feature>
<feature type="transmembrane region" description="Beta stranded" evidence="1">
    <location>
        <begin position="481"/>
        <end position="498"/>
    </location>
</feature>
<feature type="transmembrane region" description="Beta stranded" evidence="1">
    <location>
        <begin position="502"/>
        <end position="517"/>
    </location>
</feature>
<feature type="transmembrane region" description="Beta stranded" evidence="1">
    <location>
        <begin position="525"/>
        <end position="537"/>
    </location>
</feature>
<feature type="transmembrane region" description="Beta stranded" evidence="1">
    <location>
        <begin position="543"/>
        <end position="557"/>
    </location>
</feature>
<feature type="transmembrane region" description="Beta stranded" evidence="1">
    <location>
        <begin position="568"/>
        <end position="582"/>
    </location>
</feature>
<feature type="transmembrane region" description="Beta stranded" evidence="1">
    <location>
        <begin position="595"/>
        <end position="606"/>
    </location>
</feature>
<feature type="transmembrane region" description="Beta stranded" evidence="1">
    <location>
        <begin position="612"/>
        <end position="624"/>
    </location>
</feature>
<feature type="domain" description="TBDR plug" evidence="2">
    <location>
        <begin position="43"/>
        <end position="157"/>
    </location>
</feature>
<feature type="domain" description="TBDR beta-barrel" evidence="2">
    <location>
        <begin position="160"/>
        <end position="624"/>
    </location>
</feature>
<feature type="short sequence motif" description="TonB box">
    <location>
        <begin position="31"/>
        <end position="38"/>
    </location>
</feature>
<feature type="short sequence motif" description="TonB C-terminal box">
    <location>
        <begin position="607"/>
        <end position="624"/>
    </location>
</feature>
<feature type="binding site" evidence="1">
    <location>
        <position position="88"/>
    </location>
    <ligand>
        <name>cyanocob(III)alamin</name>
        <dbReference type="ChEBI" id="CHEBI:17439"/>
    </ligand>
</feature>
<feature type="binding site" evidence="1">
    <location>
        <position position="90"/>
    </location>
    <ligand>
        <name>cyanocob(III)alamin</name>
        <dbReference type="ChEBI" id="CHEBI:17439"/>
    </ligand>
</feature>
<feature type="binding site" evidence="1">
    <location>
        <position position="97"/>
    </location>
    <ligand>
        <name>cyanocob(III)alamin</name>
        <dbReference type="ChEBI" id="CHEBI:17439"/>
    </ligand>
</feature>
<feature type="binding site" evidence="1">
    <location>
        <begin position="115"/>
        <end position="116"/>
    </location>
    <ligand>
        <name>cyanocob(III)alamin</name>
        <dbReference type="ChEBI" id="CHEBI:17439"/>
    </ligand>
</feature>
<feature type="binding site" evidence="1">
    <location>
        <position position="204"/>
    </location>
    <ligand>
        <name>Ca(2+)</name>
        <dbReference type="ChEBI" id="CHEBI:29108"/>
        <label>1</label>
    </ligand>
</feature>
<feature type="binding site" evidence="1">
    <location>
        <position position="216"/>
    </location>
    <ligand>
        <name>Ca(2+)</name>
        <dbReference type="ChEBI" id="CHEBI:29108"/>
        <label>1</label>
    </ligand>
</feature>
<feature type="binding site" evidence="1">
    <location>
        <position position="218"/>
    </location>
    <ligand>
        <name>Ca(2+)</name>
        <dbReference type="ChEBI" id="CHEBI:29108"/>
        <label>1</label>
    </ligand>
</feature>
<feature type="binding site" evidence="1">
    <location>
        <position position="218"/>
    </location>
    <ligand>
        <name>Ca(2+)</name>
        <dbReference type="ChEBI" id="CHEBI:29108"/>
        <label>2</label>
    </ligand>
</feature>
<feature type="binding site" evidence="1">
    <location>
        <position position="220"/>
    </location>
    <ligand>
        <name>Ca(2+)</name>
        <dbReference type="ChEBI" id="CHEBI:29108"/>
        <label>1</label>
    </ligand>
</feature>
<feature type="binding site" evidence="1">
    <location>
        <position position="220"/>
    </location>
    <ligand>
        <name>Ca(2+)</name>
        <dbReference type="ChEBI" id="CHEBI:29108"/>
        <label>2</label>
    </ligand>
</feature>
<feature type="binding site" evidence="1">
    <location>
        <position position="254"/>
    </location>
    <ligand>
        <name>Ca(2+)</name>
        <dbReference type="ChEBI" id="CHEBI:29108"/>
        <label>2</label>
    </ligand>
</feature>
<feature type="binding site" evidence="1">
    <location>
        <position position="255"/>
    </location>
    <ligand>
        <name>Ca(2+)</name>
        <dbReference type="ChEBI" id="CHEBI:29108"/>
        <label>1</label>
    </ligand>
</feature>
<feature type="binding site" evidence="1">
    <location>
        <position position="255"/>
    </location>
    <ligand>
        <name>Ca(2+)</name>
        <dbReference type="ChEBI" id="CHEBI:29108"/>
        <label>2</label>
    </ligand>
</feature>
<feature type="binding site" evidence="1">
    <location>
        <position position="266"/>
    </location>
    <ligand>
        <name>Ca(2+)</name>
        <dbReference type="ChEBI" id="CHEBI:29108"/>
        <label>2</label>
    </ligand>
</feature>
<feature type="binding site" evidence="1">
    <location>
        <position position="314"/>
    </location>
    <ligand>
        <name>cyanocob(III)alamin</name>
        <dbReference type="ChEBI" id="CHEBI:17439"/>
    </ligand>
</feature>
<feature type="binding site" evidence="1">
    <location>
        <position position="525"/>
    </location>
    <ligand>
        <name>cyanocob(III)alamin</name>
        <dbReference type="ChEBI" id="CHEBI:17439"/>
    </ligand>
</feature>
<organism>
    <name type="scientific">Yersinia pseudotuberculosis serotype O:1b (strain IP 31758)</name>
    <dbReference type="NCBI Taxonomy" id="349747"/>
    <lineage>
        <taxon>Bacteria</taxon>
        <taxon>Pseudomonadati</taxon>
        <taxon>Pseudomonadota</taxon>
        <taxon>Gammaproteobacteria</taxon>
        <taxon>Enterobacterales</taxon>
        <taxon>Yersiniaceae</taxon>
        <taxon>Yersinia</taxon>
    </lineage>
</organism>
<keyword id="KW-0106">Calcium</keyword>
<keyword id="KW-0998">Cell outer membrane</keyword>
<keyword id="KW-0406">Ion transport</keyword>
<keyword id="KW-0472">Membrane</keyword>
<keyword id="KW-0479">Metal-binding</keyword>
<keyword id="KW-0626">Porin</keyword>
<keyword id="KW-0732">Signal</keyword>
<keyword id="KW-0798">TonB box</keyword>
<keyword id="KW-0812">Transmembrane</keyword>
<keyword id="KW-1134">Transmembrane beta strand</keyword>
<keyword id="KW-0813">Transport</keyword>
<gene>
    <name evidence="1" type="primary">btuB</name>
    <name type="ordered locus">YpsIP31758_0142</name>
</gene>
<name>BTUB_YERP3</name>
<protein>
    <recommendedName>
        <fullName evidence="1">Vitamin B12 transporter BtuB</fullName>
    </recommendedName>
    <alternativeName>
        <fullName evidence="1">Cobalamin receptor</fullName>
    </alternativeName>
    <alternativeName>
        <fullName evidence="1">Outer membrane cobalamin translocator</fullName>
    </alternativeName>
</protein>
<proteinExistence type="inferred from homology"/>
<sequence>MTIKKYTLLTALSVTAFSGWAQGNNTTDNNNEMVVTANRFPQPKSSVLAPVDVVTRADIDRWQSTNINDVLRRLPGINIAQYGGPRQLSSLFIRGTNSSHVLVLVDGVRLNQAGISGSSDLSQIPISLVQRIEYIRGPRSAVYGSDAIGGVVNIITERETLGSTLTAGLGSNGYQNYNGSTQQKLGDDTTITLAGNYDYSKGYDVVAKGNTGMASQPDRDGYLGKMLWLGANHKFNEQFSGFVRGYGFDNRSDYDSYYYPGSPLVDTRSLSSRTYDTGINFSNGGYASQLIGSYSRTQDYNYDPSYGRYDQSATLDDISQYNLQWTNTYQLGLGNVGGGLDWQKQTTEPGTNYLSNGYEQRNTGVYGTVQQFVGPVTLEGAIRGDDNSQFGWHTTWQSSAGWEFVDGYRLIGSYGTAFKAPNLGQIYSSTYGNRDLKPEESTQWEAAITGITGPLDWRLSAYRNDIDQMIATRGVYPNSRYYNVEKATIKGVEWTGSFETGPLSHQVTLEYLDPRNADTHEILARRAKQQVKYQLDWQMADLDWSVTYQYIGQRYDSVFDPITYAASPVKLAGISLWDLAVSYPVTSHLTVRGRIANLFDKDYEMVYGYQTPGREYYFTGSYNF</sequence>